<sequence length="310" mass="32888">MLDANKLQQAVDQAYTQFHSLNGGQNADYIPFLANVPGQLAAVAIVTSDGNVYSAGDSDYRFALESISKVCTLALALEDVGPQAVQDKVGADPTGLPFNSVIALELHGGKPLSPLVNAGAIATTSLINAENTEQRWQRILHIQQQLAGEQVALSDEVNQSEQTTNFHNRAIAWLLYSAGYLYCDAMEACDVYTRQCSTLINTIELATLGATLAAGGVNPLTHKRVLQANNVPYILAEMMMEGLYGRSGDWAYRVGLPGKSGVGGGILAVVPGVMGIAAFSPPLDEEGNSVRGQKMVASVAKQLGYNVFKG</sequence>
<accession>B7MQK2</accession>
<gene>
    <name evidence="1" type="primary">glsA</name>
    <name type="ordered locus">ECED1_0511</name>
</gene>
<dbReference type="EC" id="3.5.1.2" evidence="1"/>
<dbReference type="EMBL" id="CU928162">
    <property type="protein sequence ID" value="CAR06720.1"/>
    <property type="molecule type" value="Genomic_DNA"/>
</dbReference>
<dbReference type="RefSeq" id="WP_000883042.1">
    <property type="nucleotide sequence ID" value="NC_011745.1"/>
</dbReference>
<dbReference type="SMR" id="B7MQK2"/>
<dbReference type="KEGG" id="ecq:ECED1_0511"/>
<dbReference type="HOGENOM" id="CLU_027932_1_0_6"/>
<dbReference type="Proteomes" id="UP000000748">
    <property type="component" value="Chromosome"/>
</dbReference>
<dbReference type="GO" id="GO:0004359">
    <property type="term" value="F:glutaminase activity"/>
    <property type="evidence" value="ECO:0007669"/>
    <property type="project" value="UniProtKB-UniRule"/>
</dbReference>
<dbReference type="GO" id="GO:0006537">
    <property type="term" value="P:glutamate biosynthetic process"/>
    <property type="evidence" value="ECO:0007669"/>
    <property type="project" value="TreeGrafter"/>
</dbReference>
<dbReference type="GO" id="GO:0006543">
    <property type="term" value="P:glutamine catabolic process"/>
    <property type="evidence" value="ECO:0007669"/>
    <property type="project" value="TreeGrafter"/>
</dbReference>
<dbReference type="FunFam" id="3.40.710.10:FF:000014">
    <property type="entry name" value="Glutaminase"/>
    <property type="match status" value="1"/>
</dbReference>
<dbReference type="Gene3D" id="3.40.710.10">
    <property type="entry name" value="DD-peptidase/beta-lactamase superfamily"/>
    <property type="match status" value="1"/>
</dbReference>
<dbReference type="HAMAP" id="MF_00313">
    <property type="entry name" value="Glutaminase"/>
    <property type="match status" value="1"/>
</dbReference>
<dbReference type="InterPro" id="IPR012338">
    <property type="entry name" value="Beta-lactam/transpept-like"/>
</dbReference>
<dbReference type="InterPro" id="IPR015868">
    <property type="entry name" value="Glutaminase"/>
</dbReference>
<dbReference type="NCBIfam" id="TIGR03814">
    <property type="entry name" value="Gln_ase"/>
    <property type="match status" value="1"/>
</dbReference>
<dbReference type="NCBIfam" id="NF009020">
    <property type="entry name" value="PRK12356.1"/>
    <property type="match status" value="1"/>
</dbReference>
<dbReference type="PANTHER" id="PTHR12544">
    <property type="entry name" value="GLUTAMINASE"/>
    <property type="match status" value="1"/>
</dbReference>
<dbReference type="PANTHER" id="PTHR12544:SF48">
    <property type="entry name" value="GLUTAMINASE 1"/>
    <property type="match status" value="1"/>
</dbReference>
<dbReference type="Pfam" id="PF04960">
    <property type="entry name" value="Glutaminase"/>
    <property type="match status" value="1"/>
</dbReference>
<dbReference type="SUPFAM" id="SSF56601">
    <property type="entry name" value="beta-lactamase/transpeptidase-like"/>
    <property type="match status" value="1"/>
</dbReference>
<feature type="chain" id="PRO_1000132906" description="Glutaminase">
    <location>
        <begin position="1"/>
        <end position="310"/>
    </location>
</feature>
<feature type="binding site" evidence="1">
    <location>
        <position position="66"/>
    </location>
    <ligand>
        <name>substrate</name>
    </ligand>
</feature>
<feature type="binding site" evidence="1">
    <location>
        <position position="117"/>
    </location>
    <ligand>
        <name>substrate</name>
    </ligand>
</feature>
<feature type="binding site" evidence="1">
    <location>
        <position position="161"/>
    </location>
    <ligand>
        <name>substrate</name>
    </ligand>
</feature>
<feature type="binding site" evidence="1">
    <location>
        <position position="168"/>
    </location>
    <ligand>
        <name>substrate</name>
    </ligand>
</feature>
<feature type="binding site" evidence="1">
    <location>
        <position position="192"/>
    </location>
    <ligand>
        <name>substrate</name>
    </ligand>
</feature>
<feature type="binding site" evidence="1">
    <location>
        <position position="244"/>
    </location>
    <ligand>
        <name>substrate</name>
    </ligand>
</feature>
<feature type="binding site" evidence="1">
    <location>
        <position position="262"/>
    </location>
    <ligand>
        <name>substrate</name>
    </ligand>
</feature>
<feature type="modified residue" description="N6-acetyllysine" evidence="1">
    <location>
        <position position="294"/>
    </location>
</feature>
<name>GLSA_ECO81</name>
<keyword id="KW-0007">Acetylation</keyword>
<keyword id="KW-0378">Hydrolase</keyword>
<comment type="catalytic activity">
    <reaction evidence="1">
        <text>L-glutamine + H2O = L-glutamate + NH4(+)</text>
        <dbReference type="Rhea" id="RHEA:15889"/>
        <dbReference type="ChEBI" id="CHEBI:15377"/>
        <dbReference type="ChEBI" id="CHEBI:28938"/>
        <dbReference type="ChEBI" id="CHEBI:29985"/>
        <dbReference type="ChEBI" id="CHEBI:58359"/>
        <dbReference type="EC" id="3.5.1.2"/>
    </reaction>
</comment>
<comment type="subunit">
    <text evidence="1">Homotetramer.</text>
</comment>
<comment type="similarity">
    <text evidence="1">Belongs to the glutaminase family.</text>
</comment>
<evidence type="ECO:0000255" key="1">
    <source>
        <dbReference type="HAMAP-Rule" id="MF_00313"/>
    </source>
</evidence>
<organism>
    <name type="scientific">Escherichia coli O81 (strain ED1a)</name>
    <dbReference type="NCBI Taxonomy" id="585397"/>
    <lineage>
        <taxon>Bacteria</taxon>
        <taxon>Pseudomonadati</taxon>
        <taxon>Pseudomonadota</taxon>
        <taxon>Gammaproteobacteria</taxon>
        <taxon>Enterobacterales</taxon>
        <taxon>Enterobacteriaceae</taxon>
        <taxon>Escherichia</taxon>
    </lineage>
</organism>
<proteinExistence type="inferred from homology"/>
<protein>
    <recommendedName>
        <fullName evidence="1">Glutaminase</fullName>
        <ecNumber evidence="1">3.5.1.2</ecNumber>
    </recommendedName>
</protein>
<reference key="1">
    <citation type="journal article" date="2009" name="PLoS Genet.">
        <title>Organised genome dynamics in the Escherichia coli species results in highly diverse adaptive paths.</title>
        <authorList>
            <person name="Touchon M."/>
            <person name="Hoede C."/>
            <person name="Tenaillon O."/>
            <person name="Barbe V."/>
            <person name="Baeriswyl S."/>
            <person name="Bidet P."/>
            <person name="Bingen E."/>
            <person name="Bonacorsi S."/>
            <person name="Bouchier C."/>
            <person name="Bouvet O."/>
            <person name="Calteau A."/>
            <person name="Chiapello H."/>
            <person name="Clermont O."/>
            <person name="Cruveiller S."/>
            <person name="Danchin A."/>
            <person name="Diard M."/>
            <person name="Dossat C."/>
            <person name="Karoui M.E."/>
            <person name="Frapy E."/>
            <person name="Garry L."/>
            <person name="Ghigo J.M."/>
            <person name="Gilles A.M."/>
            <person name="Johnson J."/>
            <person name="Le Bouguenec C."/>
            <person name="Lescat M."/>
            <person name="Mangenot S."/>
            <person name="Martinez-Jehanne V."/>
            <person name="Matic I."/>
            <person name="Nassif X."/>
            <person name="Oztas S."/>
            <person name="Petit M.A."/>
            <person name="Pichon C."/>
            <person name="Rouy Z."/>
            <person name="Ruf C.S."/>
            <person name="Schneider D."/>
            <person name="Tourret J."/>
            <person name="Vacherie B."/>
            <person name="Vallenet D."/>
            <person name="Medigue C."/>
            <person name="Rocha E.P.C."/>
            <person name="Denamur E."/>
        </authorList>
    </citation>
    <scope>NUCLEOTIDE SEQUENCE [LARGE SCALE GENOMIC DNA]</scope>
    <source>
        <strain>ED1a</strain>
    </source>
</reference>